<organism>
    <name type="scientific">Pongo abelii</name>
    <name type="common">Sumatran orangutan</name>
    <name type="synonym">Pongo pygmaeus abelii</name>
    <dbReference type="NCBI Taxonomy" id="9601"/>
    <lineage>
        <taxon>Eukaryota</taxon>
        <taxon>Metazoa</taxon>
        <taxon>Chordata</taxon>
        <taxon>Craniata</taxon>
        <taxon>Vertebrata</taxon>
        <taxon>Euteleostomi</taxon>
        <taxon>Mammalia</taxon>
        <taxon>Eutheria</taxon>
        <taxon>Euarchontoglires</taxon>
        <taxon>Primates</taxon>
        <taxon>Haplorrhini</taxon>
        <taxon>Catarrhini</taxon>
        <taxon>Hominidae</taxon>
        <taxon>Pongo</taxon>
    </lineage>
</organism>
<protein>
    <recommendedName>
        <fullName>Baculoviral IAP repeat-containing protein 5</fullName>
    </recommendedName>
    <alternativeName>
        <fullName>Apoptosis inhibitor survivin</fullName>
    </alternativeName>
</protein>
<name>BIRC5_PONAB</name>
<keyword id="KW-0007">Acetylation</keyword>
<keyword id="KW-0053">Apoptosis</keyword>
<keyword id="KW-0131">Cell cycle</keyword>
<keyword id="KW-0132">Cell division</keyword>
<keyword id="KW-0137">Centromere</keyword>
<keyword id="KW-0158">Chromosome</keyword>
<keyword id="KW-0159">Chromosome partition</keyword>
<keyword id="KW-0963">Cytoplasm</keyword>
<keyword id="KW-0206">Cytoskeleton</keyword>
<keyword id="KW-0995">Kinetochore</keyword>
<keyword id="KW-0479">Metal-binding</keyword>
<keyword id="KW-0493">Microtubule</keyword>
<keyword id="KW-0498">Mitosis</keyword>
<keyword id="KW-0539">Nucleus</keyword>
<keyword id="KW-0597">Phosphoprotein</keyword>
<keyword id="KW-0646">Protease inhibitor</keyword>
<keyword id="KW-1185">Reference proteome</keyword>
<keyword id="KW-0678">Repressor</keyword>
<keyword id="KW-0789">Thiol protease inhibitor</keyword>
<keyword id="KW-0804">Transcription</keyword>
<keyword id="KW-0805">Transcription regulation</keyword>
<keyword id="KW-0832">Ubl conjugation</keyword>
<keyword id="KW-0862">Zinc</keyword>
<dbReference type="EMBL" id="CR859036">
    <property type="protein sequence ID" value="CAH91231.1"/>
    <property type="molecule type" value="mRNA"/>
</dbReference>
<dbReference type="RefSeq" id="NP_001125727.1">
    <property type="nucleotide sequence ID" value="NM_001132255.1"/>
</dbReference>
<dbReference type="BMRB" id="Q5RAH9"/>
<dbReference type="SMR" id="Q5RAH9"/>
<dbReference type="FunCoup" id="Q5RAH9">
    <property type="interactions" value="1526"/>
</dbReference>
<dbReference type="STRING" id="9601.ENSPPYP00000009754"/>
<dbReference type="MEROPS" id="I32.005"/>
<dbReference type="GeneID" id="100172652"/>
<dbReference type="KEGG" id="pon:100172652"/>
<dbReference type="CTD" id="332"/>
<dbReference type="eggNOG" id="KOG1101">
    <property type="taxonomic scope" value="Eukaryota"/>
</dbReference>
<dbReference type="InParanoid" id="Q5RAH9"/>
<dbReference type="OrthoDB" id="2196114at2759"/>
<dbReference type="Proteomes" id="UP000001595">
    <property type="component" value="Unplaced"/>
</dbReference>
<dbReference type="GO" id="GO:0005814">
    <property type="term" value="C:centriole"/>
    <property type="evidence" value="ECO:0000250"/>
    <property type="project" value="UniProtKB"/>
</dbReference>
<dbReference type="GO" id="GO:0032133">
    <property type="term" value="C:chromosome passenger complex"/>
    <property type="evidence" value="ECO:0000250"/>
    <property type="project" value="UniProtKB"/>
</dbReference>
<dbReference type="GO" id="GO:0000775">
    <property type="term" value="C:chromosome, centromeric region"/>
    <property type="evidence" value="ECO:0000250"/>
    <property type="project" value="UniProtKB"/>
</dbReference>
<dbReference type="GO" id="GO:0005737">
    <property type="term" value="C:cytoplasm"/>
    <property type="evidence" value="ECO:0000250"/>
    <property type="project" value="UniProtKB"/>
</dbReference>
<dbReference type="GO" id="GO:0005881">
    <property type="term" value="C:cytoplasmic microtubule"/>
    <property type="evidence" value="ECO:0000250"/>
    <property type="project" value="UniProtKB"/>
</dbReference>
<dbReference type="GO" id="GO:0005829">
    <property type="term" value="C:cytosol"/>
    <property type="evidence" value="ECO:0000250"/>
    <property type="project" value="UniProtKB"/>
</dbReference>
<dbReference type="GO" id="GO:0031021">
    <property type="term" value="C:interphase microtubule organizing center"/>
    <property type="evidence" value="ECO:0000250"/>
    <property type="project" value="UniProtKB"/>
</dbReference>
<dbReference type="GO" id="GO:0000776">
    <property type="term" value="C:kinetochore"/>
    <property type="evidence" value="ECO:0000250"/>
    <property type="project" value="UniProtKB"/>
</dbReference>
<dbReference type="GO" id="GO:0030496">
    <property type="term" value="C:midbody"/>
    <property type="evidence" value="ECO:0000250"/>
    <property type="project" value="UniProtKB"/>
</dbReference>
<dbReference type="GO" id="GO:0005634">
    <property type="term" value="C:nucleus"/>
    <property type="evidence" value="ECO:0000250"/>
    <property type="project" value="UniProtKB"/>
</dbReference>
<dbReference type="GO" id="GO:0005876">
    <property type="term" value="C:spindle microtubule"/>
    <property type="evidence" value="ECO:0000250"/>
    <property type="project" value="UniProtKB"/>
</dbReference>
<dbReference type="GO" id="GO:0004869">
    <property type="term" value="F:cysteine-type endopeptidase inhibitor activity"/>
    <property type="evidence" value="ECO:0007669"/>
    <property type="project" value="UniProtKB-KW"/>
</dbReference>
<dbReference type="GO" id="GO:0043027">
    <property type="term" value="F:cysteine-type endopeptidase inhibitor activity involved in apoptotic process"/>
    <property type="evidence" value="ECO:0000250"/>
    <property type="project" value="UniProtKB"/>
</dbReference>
<dbReference type="GO" id="GO:0008017">
    <property type="term" value="F:microtubule binding"/>
    <property type="evidence" value="ECO:0000250"/>
    <property type="project" value="UniProtKB"/>
</dbReference>
<dbReference type="GO" id="GO:0042803">
    <property type="term" value="F:protein homodimerization activity"/>
    <property type="evidence" value="ECO:0000250"/>
    <property type="project" value="UniProtKB"/>
</dbReference>
<dbReference type="GO" id="GO:0015631">
    <property type="term" value="F:tubulin binding"/>
    <property type="evidence" value="ECO:0000250"/>
    <property type="project" value="UniProtKB"/>
</dbReference>
<dbReference type="GO" id="GO:0008270">
    <property type="term" value="F:zinc ion binding"/>
    <property type="evidence" value="ECO:0000250"/>
    <property type="project" value="UniProtKB"/>
</dbReference>
<dbReference type="GO" id="GO:0006915">
    <property type="term" value="P:apoptotic process"/>
    <property type="evidence" value="ECO:0007669"/>
    <property type="project" value="UniProtKB-KW"/>
</dbReference>
<dbReference type="GO" id="GO:0051301">
    <property type="term" value="P:cell division"/>
    <property type="evidence" value="ECO:0000250"/>
    <property type="project" value="UniProtKB"/>
</dbReference>
<dbReference type="GO" id="GO:0007059">
    <property type="term" value="P:chromosome segregation"/>
    <property type="evidence" value="ECO:0007669"/>
    <property type="project" value="UniProtKB-KW"/>
</dbReference>
<dbReference type="GO" id="GO:0051303">
    <property type="term" value="P:establishment of chromosome localization"/>
    <property type="evidence" value="ECO:0000250"/>
    <property type="project" value="UniProtKB"/>
</dbReference>
<dbReference type="GO" id="GO:0000086">
    <property type="term" value="P:G2/M transition of mitotic cell cycle"/>
    <property type="evidence" value="ECO:0000250"/>
    <property type="project" value="UniProtKB"/>
</dbReference>
<dbReference type="GO" id="GO:0000281">
    <property type="term" value="P:mitotic cytokinesis"/>
    <property type="evidence" value="ECO:0000250"/>
    <property type="project" value="UniProtKB"/>
</dbReference>
<dbReference type="GO" id="GO:0007094">
    <property type="term" value="P:mitotic spindle assembly checkpoint signaling"/>
    <property type="evidence" value="ECO:0000250"/>
    <property type="project" value="UniProtKB"/>
</dbReference>
<dbReference type="GO" id="GO:0043066">
    <property type="term" value="P:negative regulation of apoptotic process"/>
    <property type="evidence" value="ECO:0000250"/>
    <property type="project" value="UniProtKB"/>
</dbReference>
<dbReference type="GO" id="GO:0045892">
    <property type="term" value="P:negative regulation of DNA-templated transcription"/>
    <property type="evidence" value="ECO:0000250"/>
    <property type="project" value="UniProtKB"/>
</dbReference>
<dbReference type="GO" id="GO:0031536">
    <property type="term" value="P:positive regulation of exit from mitosis"/>
    <property type="evidence" value="ECO:0000250"/>
    <property type="project" value="UniProtKB"/>
</dbReference>
<dbReference type="GO" id="GO:0045931">
    <property type="term" value="P:positive regulation of mitotic cell cycle"/>
    <property type="evidence" value="ECO:0000250"/>
    <property type="project" value="UniProtKB"/>
</dbReference>
<dbReference type="GO" id="GO:0031503">
    <property type="term" value="P:protein-containing complex localization"/>
    <property type="evidence" value="ECO:0000250"/>
    <property type="project" value="UniProtKB"/>
</dbReference>
<dbReference type="CDD" id="cd00022">
    <property type="entry name" value="BIR"/>
    <property type="match status" value="1"/>
</dbReference>
<dbReference type="FunFam" id="1.10.1170.10:FF:000009">
    <property type="entry name" value="Baculoviral IAP repeat-containing protein 5"/>
    <property type="match status" value="1"/>
</dbReference>
<dbReference type="Gene3D" id="1.10.1170.10">
    <property type="entry name" value="Inhibitor Of Apoptosis Protein (2mihbC-IAP-1), Chain A"/>
    <property type="match status" value="1"/>
</dbReference>
<dbReference type="InterPro" id="IPR051190">
    <property type="entry name" value="Baculoviral_IAP"/>
</dbReference>
<dbReference type="InterPro" id="IPR001370">
    <property type="entry name" value="BIR_rpt"/>
</dbReference>
<dbReference type="PANTHER" id="PTHR46771:SF3">
    <property type="entry name" value="BACULOVIRAL IAP REPEAT-CONTAINING PROTEIN 5"/>
    <property type="match status" value="1"/>
</dbReference>
<dbReference type="PANTHER" id="PTHR46771">
    <property type="entry name" value="DETERIN"/>
    <property type="match status" value="1"/>
</dbReference>
<dbReference type="Pfam" id="PF00653">
    <property type="entry name" value="BIR"/>
    <property type="match status" value="1"/>
</dbReference>
<dbReference type="SMART" id="SM00238">
    <property type="entry name" value="BIR"/>
    <property type="match status" value="1"/>
</dbReference>
<dbReference type="SUPFAM" id="SSF57924">
    <property type="entry name" value="Inhibitor of apoptosis (IAP) repeat"/>
    <property type="match status" value="1"/>
</dbReference>
<dbReference type="PROSITE" id="PS50143">
    <property type="entry name" value="BIR_REPEAT_2"/>
    <property type="match status" value="1"/>
</dbReference>
<comment type="function">
    <text evidence="2">Multitasking protein that has dual roles in promoting cell proliferation and preventing apoptosis (By similarity). Component of a chromosome passage protein complex (CPC) which is essential for chromosome alignment and segregation during mitosis and cytokinesis (By similarity). Acts as an important regulator of the localization of this complex; directs CPC movement to different locations from the inner centromere during prometaphase to midbody during cytokinesis and participates in the organization of the center spindle by associating with polymerized microtubules (By similarity). Involved in the recruitment of CPC to centromeres during early mitosis via association with histone H3 phosphorylated at 'Thr-3' (H3pT3) during mitosis (By similarity). The complex with RAN plays a role in mitotic spindle formation by serving as a physical scaffold to help deliver the RAN effector molecule TPX2 to microtubules (By similarity). May counteract a default induction of apoptosis in G2/M phase (By similarity). The acetylated form represses STAT3 transactivation of target gene promoters (By similarity). May play a role in neoplasia. Inhibitor of CASP3 and CASP7 (By similarity). Essential for the maintenance of mitochondrial integrity and function (By similarity).</text>
</comment>
<comment type="subunit">
    <text evidence="2">Monomer or homodimer. Exists as a homodimer in the apo state and as a monomer in the CPC-bound state. The monomer protects cells against apoptosis more efficiently than the dimer. Only the dimeric form is capable of enhancing tubulin stability in cells. When phosphorylated, interacts with LAMTOR5/HBXIP; the resulting complex binds pro-CASP9, as well as active CASP9, but much less efficiently. Component of the chromosomal passenger complex (CPC) composed of at least BIRC5/survivin, CDCA8/borealin, INCENP, AURKB or AURKC; in the complex forms a triple-helix bundle-based subcomplex with INCENP and CDCA8. Interacts with JTB. Interacts (via BIR domain) with histone H3 phosphorylated at 'Thr-3' (H3pT3). Interacts with EVI5. Interacts with GTP-bound RAN in both the S and M phases of the cell cycle. Interacts with USP9X. Interacts with tubulin. Interacts with BIRC2/c-IAP1. The acetylated form at Lys-129 interacts with STAT3. The monomeric form deacetylated at Lys-129 interacts with XPO1/CRM1. The monomeric form interacts with XIAP/BIRC4. Both the dimeric and monomeric form can interact with DIABLO/SMAC. Interacts with BIRC6/bruce. Interacts with FBXL7; this interaction facilitates the polyubiquitination and subsequent proteasomal degradation of BIRC5 by the SCF(FBXL7) E3 ubiquitin-protein ligase complex (By similarity).</text>
</comment>
<comment type="subcellular location">
    <subcellularLocation>
        <location evidence="2">Cytoplasm</location>
    </subcellularLocation>
    <subcellularLocation>
        <location evidence="2">Nucleus</location>
    </subcellularLocation>
    <subcellularLocation>
        <location evidence="2">Chromosome</location>
    </subcellularLocation>
    <subcellularLocation>
        <location evidence="2">Chromosome</location>
        <location evidence="2">Centromere</location>
    </subcellularLocation>
    <subcellularLocation>
        <location evidence="2">Cytoplasm</location>
        <location evidence="2">Cytoskeleton</location>
        <location evidence="2">Spindle</location>
    </subcellularLocation>
    <subcellularLocation>
        <location evidence="2">Chromosome</location>
        <location evidence="2">Centromere</location>
        <location evidence="2">Kinetochore</location>
    </subcellularLocation>
    <subcellularLocation>
        <location evidence="2">Midbody</location>
    </subcellularLocation>
    <text evidence="1 2">ocalizes at the centromeres from prophase to metaphase, at the spindle midzone during anaphase and a the midbody during telophase and cytokinesis. Accumulates in the nucleus upon treatment with leptomycin B (LMB), a XPO1/CRM1 nuclear export inhibitor (By similarity). Localizes on chromosome arms and inner centromeres from prophase through metaphase. Localizes to kinetochores in metaphase, distributes to the midzone microtubules in anaphase and at telophase, localizes exclusively to the midbody. Colocalizes with AURKB at mitotic chromosomes. Acetylation at Lys-129 directs its localization to the nucleus by enhancing homodimerization and thereby inhibiting XPO1/CRM1-mediated nuclear export (By similarity).</text>
</comment>
<comment type="domain">
    <text evidence="2">The BIR repeat is necessary and sufficient for LAMTOR5 binding.</text>
</comment>
<comment type="PTM">
    <text evidence="2">Ubiquitinated by the Cul9-RING ubiquitin-protein ligase complex, leading to its degradation. Ubiquitination is required for centrosomal targeting. Deubiquitinated by USP35 or USP38; leading to stabilization.</text>
</comment>
<comment type="PTM">
    <text evidence="2">Acetylation at Lys-129 results in its homodimerization, while deacetylation promotes the formation of monomers which heterodimerize with XPO1/CRM1 which facilitates its nuclear export. The acetylated form represses STAT3 transactivation. The dynamic equilibrium between its acetylation and deacetylation at Lys-129 determines its interaction with XPO1/CRM1, its subsequent subcellular localization, and its ability to inhibit STAT3 transactivation.</text>
</comment>
<comment type="PTM">
    <text evidence="2">In vitro phosphorylation at Thr-117 by AURKB prevents interaction with INCENP and localization to mitotic chromosomes. Phosphorylation at Thr-48 by CK2 is critical for its mitotic and anti-apoptotic activities. Phosphorylation at Thr-34 by CDK15 is critical for its anti-apoptotic activity. Phosphorylation at Ser-20 by AURKC is critical for regulation of proper chromosome alignment and segregation, and possibly cytokinesis.</text>
</comment>
<comment type="similarity">
    <text evidence="4">Belongs to the IAP family.</text>
</comment>
<proteinExistence type="evidence at transcript level"/>
<reference key="1">
    <citation type="submission" date="2004-11" db="EMBL/GenBank/DDBJ databases">
        <authorList>
            <consortium name="The German cDNA consortium"/>
        </authorList>
    </citation>
    <scope>NUCLEOTIDE SEQUENCE [LARGE SCALE MRNA]</scope>
    <source>
        <tissue>Heart</tissue>
    </source>
</reference>
<sequence>MGAPTLPPAWQPFLKDHRISTFKNWPFLEGCACTPERMAEAGFIHCPTENEPDLAQCFFCFKELEGWEPDDDPIEEHKKHSSGCAFLSVKKQFEELTLGEFLKLDRERAKNKIAKETNNKKKEFEETAKKVRRAIEQLAAMD</sequence>
<feature type="chain" id="PRO_0000122359" description="Baculoviral IAP repeat-containing protein 5">
    <location>
        <begin position="1"/>
        <end position="142"/>
    </location>
</feature>
<feature type="repeat" description="BIR">
    <location>
        <begin position="18"/>
        <end position="88"/>
    </location>
</feature>
<feature type="binding site" evidence="3">
    <location>
        <position position="57"/>
    </location>
    <ligand>
        <name>Zn(2+)</name>
        <dbReference type="ChEBI" id="CHEBI:29105"/>
    </ligand>
</feature>
<feature type="binding site" evidence="3">
    <location>
        <position position="60"/>
    </location>
    <ligand>
        <name>Zn(2+)</name>
        <dbReference type="ChEBI" id="CHEBI:29105"/>
    </ligand>
</feature>
<feature type="binding site" evidence="3">
    <location>
        <position position="77"/>
    </location>
    <ligand>
        <name>Zn(2+)</name>
        <dbReference type="ChEBI" id="CHEBI:29105"/>
    </ligand>
</feature>
<feature type="binding site" evidence="3">
    <location>
        <position position="84"/>
    </location>
    <ligand>
        <name>Zn(2+)</name>
        <dbReference type="ChEBI" id="CHEBI:29105"/>
    </ligand>
</feature>
<feature type="site" description="Interaction with FBXL7" evidence="2">
    <location>
        <position position="126"/>
    </location>
</feature>
<feature type="modified residue" description="Phosphoserine; by AURKC" evidence="2">
    <location>
        <position position="20"/>
    </location>
</feature>
<feature type="modified residue" description="N6-acetyllysine" evidence="2">
    <location>
        <position position="23"/>
    </location>
</feature>
<feature type="modified residue" description="Phosphothreonine; by CDK1 and CDK15" evidence="2">
    <location>
        <position position="34"/>
    </location>
</feature>
<feature type="modified residue" description="Phosphothreonine" evidence="2">
    <location>
        <position position="48"/>
    </location>
</feature>
<feature type="modified residue" description="N6-acetyllysine" evidence="2">
    <location>
        <position position="90"/>
    </location>
</feature>
<feature type="modified residue" description="N6-acetyllysine" evidence="2">
    <location>
        <position position="110"/>
    </location>
</feature>
<feature type="modified residue" description="N6-acetyllysine" evidence="2">
    <location>
        <position position="112"/>
    </location>
</feature>
<feature type="modified residue" description="N6-acetyllysine" evidence="2">
    <location>
        <position position="115"/>
    </location>
</feature>
<feature type="modified residue" description="Phosphothreonine; by AURKB" evidence="2">
    <location>
        <position position="117"/>
    </location>
</feature>
<feature type="modified residue" description="N6-acetyllysine" evidence="2">
    <location>
        <position position="129"/>
    </location>
</feature>
<gene>
    <name type="primary">BIRC5</name>
</gene>
<evidence type="ECO:0000250" key="1">
    <source>
        <dbReference type="UniProtKB" id="E3SCZ8"/>
    </source>
</evidence>
<evidence type="ECO:0000250" key="2">
    <source>
        <dbReference type="UniProtKB" id="O15392"/>
    </source>
</evidence>
<evidence type="ECO:0000255" key="3">
    <source>
        <dbReference type="PROSITE-ProRule" id="PRU00029"/>
    </source>
</evidence>
<evidence type="ECO:0000305" key="4"/>
<accession>Q5RAH9</accession>